<gene>
    <name evidence="1" type="primary">atpH</name>
    <name evidence="1" type="synonym">atpD</name>
    <name type="ordered locus">all0006</name>
</gene>
<organism>
    <name type="scientific">Nostoc sp. (strain PCC 7120 / SAG 25.82 / UTEX 2576)</name>
    <dbReference type="NCBI Taxonomy" id="103690"/>
    <lineage>
        <taxon>Bacteria</taxon>
        <taxon>Bacillati</taxon>
        <taxon>Cyanobacteriota</taxon>
        <taxon>Cyanophyceae</taxon>
        <taxon>Nostocales</taxon>
        <taxon>Nostocaceae</taxon>
        <taxon>Nostoc</taxon>
    </lineage>
</organism>
<reference key="1">
    <citation type="journal article" date="1988" name="J. Bacteriol.">
        <title>Genes encoding the alpha, gamma, delta, and four F0 subunits of ATP synthase constitute an operon in the cyanobacterium Anabaena sp. strain PCC 7120.</title>
        <authorList>
            <person name="McCarn D.F."/>
            <person name="Whitaker R.A."/>
            <person name="Alam J."/>
            <person name="Vrba J.M."/>
            <person name="Curtis S.E."/>
        </authorList>
    </citation>
    <scope>NUCLEOTIDE SEQUENCE [GENOMIC DNA]</scope>
</reference>
<reference key="2">
    <citation type="journal article" date="2001" name="DNA Res.">
        <title>Complete genomic sequence of the filamentous nitrogen-fixing cyanobacterium Anabaena sp. strain PCC 7120.</title>
        <authorList>
            <person name="Kaneko T."/>
            <person name="Nakamura Y."/>
            <person name="Wolk C.P."/>
            <person name="Kuritz T."/>
            <person name="Sasamoto S."/>
            <person name="Watanabe A."/>
            <person name="Iriguchi M."/>
            <person name="Ishikawa A."/>
            <person name="Kawashima K."/>
            <person name="Kimura T."/>
            <person name="Kishida Y."/>
            <person name="Kohara M."/>
            <person name="Matsumoto M."/>
            <person name="Matsuno A."/>
            <person name="Muraki A."/>
            <person name="Nakazaki N."/>
            <person name="Shimpo S."/>
            <person name="Sugimoto M."/>
            <person name="Takazawa M."/>
            <person name="Yamada M."/>
            <person name="Yasuda M."/>
            <person name="Tabata S."/>
        </authorList>
    </citation>
    <scope>NUCLEOTIDE SEQUENCE [LARGE SCALE GENOMIC DNA]</scope>
    <source>
        <strain>PCC 7120 / SAG 25.82 / UTEX 2576</strain>
    </source>
</reference>
<keyword id="KW-0066">ATP synthesis</keyword>
<keyword id="KW-0139">CF(1)</keyword>
<keyword id="KW-0375">Hydrogen ion transport</keyword>
<keyword id="KW-0406">Ion transport</keyword>
<keyword id="KW-0472">Membrane</keyword>
<keyword id="KW-1185">Reference proteome</keyword>
<keyword id="KW-0793">Thylakoid</keyword>
<keyword id="KW-0813">Transport</keyword>
<dbReference type="EMBL" id="AF242564">
    <property type="protein sequence ID" value="AAA21990.1"/>
    <property type="molecule type" value="Genomic_DNA"/>
</dbReference>
<dbReference type="EMBL" id="BA000019">
    <property type="protein sequence ID" value="BAB77530.1"/>
    <property type="molecule type" value="Genomic_DNA"/>
</dbReference>
<dbReference type="PIR" id="AF1807">
    <property type="entry name" value="AF1807"/>
</dbReference>
<dbReference type="RefSeq" id="WP_010994183.1">
    <property type="nucleotide sequence ID" value="NZ_RSCN01000005.1"/>
</dbReference>
<dbReference type="SMR" id="P12406"/>
<dbReference type="STRING" id="103690.gene:10492010"/>
<dbReference type="KEGG" id="ana:all0006"/>
<dbReference type="eggNOG" id="COG0712">
    <property type="taxonomic scope" value="Bacteria"/>
</dbReference>
<dbReference type="OrthoDB" id="9802471at2"/>
<dbReference type="Proteomes" id="UP000002483">
    <property type="component" value="Chromosome"/>
</dbReference>
<dbReference type="GO" id="GO:0031676">
    <property type="term" value="C:plasma membrane-derived thylakoid membrane"/>
    <property type="evidence" value="ECO:0007669"/>
    <property type="project" value="UniProtKB-SubCell"/>
</dbReference>
<dbReference type="GO" id="GO:0045259">
    <property type="term" value="C:proton-transporting ATP synthase complex"/>
    <property type="evidence" value="ECO:0007669"/>
    <property type="project" value="UniProtKB-KW"/>
</dbReference>
<dbReference type="GO" id="GO:0046933">
    <property type="term" value="F:proton-transporting ATP synthase activity, rotational mechanism"/>
    <property type="evidence" value="ECO:0007669"/>
    <property type="project" value="UniProtKB-UniRule"/>
</dbReference>
<dbReference type="Gene3D" id="1.10.520.20">
    <property type="entry name" value="N-terminal domain of the delta subunit of the F1F0-ATP synthase"/>
    <property type="match status" value="1"/>
</dbReference>
<dbReference type="HAMAP" id="MF_01416">
    <property type="entry name" value="ATP_synth_delta_bact"/>
    <property type="match status" value="1"/>
</dbReference>
<dbReference type="InterPro" id="IPR026015">
    <property type="entry name" value="ATP_synth_OSCP/delta_N_sf"/>
</dbReference>
<dbReference type="InterPro" id="IPR020781">
    <property type="entry name" value="ATPase_OSCP/d_CS"/>
</dbReference>
<dbReference type="InterPro" id="IPR000711">
    <property type="entry name" value="ATPase_OSCP/dsu"/>
</dbReference>
<dbReference type="NCBIfam" id="TIGR01145">
    <property type="entry name" value="ATP_synt_delta"/>
    <property type="match status" value="1"/>
</dbReference>
<dbReference type="NCBIfam" id="NF004402">
    <property type="entry name" value="PRK05758.2-2"/>
    <property type="match status" value="1"/>
</dbReference>
<dbReference type="PANTHER" id="PTHR11910">
    <property type="entry name" value="ATP SYNTHASE DELTA CHAIN"/>
    <property type="match status" value="1"/>
</dbReference>
<dbReference type="Pfam" id="PF00213">
    <property type="entry name" value="OSCP"/>
    <property type="match status" value="1"/>
</dbReference>
<dbReference type="PRINTS" id="PR00125">
    <property type="entry name" value="ATPASEDELTA"/>
</dbReference>
<dbReference type="SUPFAM" id="SSF47928">
    <property type="entry name" value="N-terminal domain of the delta subunit of the F1F0-ATP synthase"/>
    <property type="match status" value="1"/>
</dbReference>
<dbReference type="PROSITE" id="PS00389">
    <property type="entry name" value="ATPASE_DELTA"/>
    <property type="match status" value="1"/>
</dbReference>
<name>ATPD_NOSS1</name>
<sequence length="183" mass="20365">MTSKVANTEVAQPYAQALLSIAKSKSLTEEFGTDARTLLNLLTENQQLRNFIDNPFIAAENKKALIKQILSEASPYLRNFLLLLVDKRRIFFLPEILQQYLALLRQLNQTVLAEVTSAVALTEDQQQAVTEKVLALTKARQVELATKVDSDLIGGVIIKVGSQVIDSSIRGQLRRLSLRLSNS</sequence>
<protein>
    <recommendedName>
        <fullName evidence="1">ATP synthase subunit delta</fullName>
    </recommendedName>
    <alternativeName>
        <fullName evidence="1">ATP synthase F(1) sector subunit delta</fullName>
    </alternativeName>
    <alternativeName>
        <fullName evidence="1">F-type ATPase subunit delta</fullName>
        <shortName evidence="1">F-ATPase subunit delta</shortName>
    </alternativeName>
</protein>
<evidence type="ECO:0000255" key="1">
    <source>
        <dbReference type="HAMAP-Rule" id="MF_01416"/>
    </source>
</evidence>
<proteinExistence type="inferred from homology"/>
<accession>P12406</accession>
<comment type="function">
    <text evidence="1">F(1)F(0) ATP synthase produces ATP from ADP in the presence of a proton or sodium gradient. F-type ATPases consist of two structural domains, F(1) containing the extramembraneous catalytic core and F(0) containing the membrane proton channel, linked together by a central stalk and a peripheral stalk. During catalysis, ATP synthesis in the catalytic domain of F(1) is coupled via a rotary mechanism of the central stalk subunits to proton translocation.</text>
</comment>
<comment type="function">
    <text evidence="1">This protein is part of the stalk that links CF(0) to CF(1). It either transmits conformational changes from CF(0) to CF(1) or is implicated in proton conduction.</text>
</comment>
<comment type="subunit">
    <text evidence="1">F-type ATPases have 2 components, F(1) - the catalytic core - and F(0) - the membrane proton channel. F(1) has five subunits: alpha(3), beta(3), gamma(1), delta(1), epsilon(1). CF(0) has four main subunits: a(1), b(1), b'(1) and c(10-14). The alpha and beta chains form an alternating ring which encloses part of the gamma chain. F(1) is attached to F(0) by a central stalk formed by the gamma and epsilon chains, while a peripheral stalk is formed by the delta, b and b' chains.</text>
</comment>
<comment type="subcellular location">
    <subcellularLocation>
        <location evidence="1">Cellular thylakoid membrane</location>
        <topology evidence="1">Peripheral membrane protein</topology>
    </subcellularLocation>
</comment>
<comment type="similarity">
    <text evidence="1">Belongs to the ATPase delta chain family.</text>
</comment>
<feature type="chain" id="PRO_0000193451" description="ATP synthase subunit delta">
    <location>
        <begin position="1"/>
        <end position="183"/>
    </location>
</feature>